<accession>P37082</accession>
<organism>
    <name type="scientific">Klebsiella pneumoniae</name>
    <dbReference type="NCBI Taxonomy" id="573"/>
    <lineage>
        <taxon>Bacteria</taxon>
        <taxon>Pseudomonadati</taxon>
        <taxon>Pseudomonadota</taxon>
        <taxon>Gammaproteobacteria</taxon>
        <taxon>Enterobacterales</taxon>
        <taxon>Enterobacteriaceae</taxon>
        <taxon>Klebsiella/Raoultella group</taxon>
        <taxon>Klebsiella</taxon>
        <taxon>Klebsiella pneumoniae complex</taxon>
    </lineage>
</organism>
<proteinExistence type="evidence at transcript level"/>
<evidence type="ECO:0000255" key="1">
    <source>
        <dbReference type="PROSITE-ProRule" id="PRU00429"/>
    </source>
</evidence>
<evidence type="ECO:0000269" key="2">
    <source>
    </source>
</evidence>
<evidence type="ECO:0000269" key="3">
    <source>
    </source>
</evidence>
<evidence type="ECO:0000303" key="4">
    <source>
    </source>
</evidence>
<evidence type="ECO:0000305" key="5">
    <source>
    </source>
</evidence>
<evidence type="ECO:0000305" key="6">
    <source>
    </source>
</evidence>
<evidence type="ECO:0000305" key="7">
    <source>
    </source>
</evidence>
<gene>
    <name evidence="4" type="primary">sorA</name>
</gene>
<sequence length="266" mass="27872">MEISTLQIIAIFIFSCIAGMGSVLDEFQTHRPLIACTVIGLILGDLKTGVMLGGTLELIALGWMNVGAAQSPDSALASIISAILVIVGHQSIAIGIAIALPVAAAGQVLTVFARTITVVFQHAADKAAEEARFRTIDLLHVSALGVQGLRVAIPALVVSLFVSADMVSSMLSAIPEFVTRGLQIAGGFIVVVGYAMVLRMMGVKYLMPFFFLGFLAGGYLDFSLLAFGGVGVIIALIYIQLNPQWRKAEPAASTAPSAPALDQLDD</sequence>
<protein>
    <recommendedName>
        <fullName evidence="4">PTS system sorbose-specific EIIC component</fullName>
    </recommendedName>
    <alternativeName>
        <fullName evidence="4">EIIC-Sor</fullName>
    </alternativeName>
    <alternativeName>
        <fullName evidence="4">Sorbose permease IIC component</fullName>
    </alternativeName>
</protein>
<reference key="1">
    <citation type="journal article" date="1994" name="Biochim. Biophys. Acta">
        <title>Sequence of the sor-operon for L-sorbose utilization from Klebsiella pneumoniae KAY2026.</title>
        <authorList>
            <person name="Wehmeier U.F."/>
            <person name="Lengeler J.W."/>
        </authorList>
    </citation>
    <scope>NUCLEOTIDE SEQUENCE [GENOMIC DNA]</scope>
    <scope>FUNCTION</scope>
    <source>
        <strain>1033-5P14 / KAY2026</strain>
    </source>
</reference>
<reference key="2">
    <citation type="journal article" date="1995" name="Mol. Gen. Genet.">
        <title>Molecular analysis of the phosphoenolpyruvate-dependent L-sorbose: phosphotransferase system from Klebsiella pneumoniae and of its multidomain structure.</title>
        <authorList>
            <person name="Wehmeier U.F."/>
            <person name="Wohrl B.M."/>
            <person name="Lengeler J.W."/>
        </authorList>
    </citation>
    <scope>NUCLEOTIDE SEQUENCE [GENOMIC DNA]</scope>
</reference>
<reference key="3">
    <citation type="journal article" date="1984" name="J. Bacteriol.">
        <title>L-Sorbose metabolism in Klebsiella pneumoniae and Sor+ derivatives of Escherichia coli K-12 and chemotaxis toward sorbose.</title>
        <authorList>
            <person name="Sprenger G.A."/>
            <person name="Lengeler J.W."/>
        </authorList>
    </citation>
    <scope>FUNCTION</scope>
    <scope>SUBCELLULAR LOCATION</scope>
    <source>
        <strain>1033-5P14 / KAY2026</strain>
    </source>
</reference>
<reference key="4">
    <citation type="journal article" date="1990" name="Mol. Microbiol.">
        <title>Cloning and physical mapping of the sor genes for L-sorbose transport and metabolism from Klebsiella pneumoniae.</title>
        <authorList>
            <person name="Woehrl B.M."/>
            <person name="Lengeler J.W."/>
        </authorList>
    </citation>
    <scope>FUNCTION</scope>
    <scope>INDUCTION</scope>
</reference>
<name>PTRC_KLEPN</name>
<keyword id="KW-0997">Cell inner membrane</keyword>
<keyword id="KW-1003">Cell membrane</keyword>
<keyword id="KW-0472">Membrane</keyword>
<keyword id="KW-0598">Phosphotransferase system</keyword>
<keyword id="KW-0762">Sugar transport</keyword>
<keyword id="KW-0812">Transmembrane</keyword>
<keyword id="KW-1133">Transmembrane helix</keyword>
<keyword id="KW-0813">Transport</keyword>
<comment type="function">
    <text evidence="3 5 7">The phosphoenolpyruvate-dependent sugar phosphotransferase system (PTS), a major carbohydrate active transport system, catalyzes the phosphorylation of incoming sugar substrates concomitant with their translocation across the cell membrane. The enzyme II SorABFM PTS system is involved in L-sorbose transport.</text>
</comment>
<comment type="subcellular location">
    <subcellularLocation>
        <location evidence="6">Cell inner membrane</location>
        <topology evidence="1">Multi-pass membrane protein</topology>
    </subcellularLocation>
</comment>
<comment type="induction">
    <text evidence="2">By L-sorbose.</text>
</comment>
<comment type="domain">
    <text evidence="1">The EIIC type-4 domain forms the PTS system translocation channel and contains the specific substrate-binding site.</text>
</comment>
<dbReference type="EMBL" id="X66059">
    <property type="protein sequence ID" value="CAA46859.1"/>
    <property type="molecule type" value="Genomic_DNA"/>
</dbReference>
<dbReference type="PIR" id="S50189">
    <property type="entry name" value="S50189"/>
</dbReference>
<dbReference type="SMR" id="P37082"/>
<dbReference type="TCDB" id="4.A.6.1.3">
    <property type="family name" value="the pts mannose-fructose-sorbose (man) family"/>
</dbReference>
<dbReference type="GO" id="GO:0005886">
    <property type="term" value="C:plasma membrane"/>
    <property type="evidence" value="ECO:0007669"/>
    <property type="project" value="UniProtKB-SubCell"/>
</dbReference>
<dbReference type="GO" id="GO:0009401">
    <property type="term" value="P:phosphoenolpyruvate-dependent sugar phosphotransferase system"/>
    <property type="evidence" value="ECO:0007669"/>
    <property type="project" value="UniProtKB-KW"/>
</dbReference>
<dbReference type="InterPro" id="IPR050303">
    <property type="entry name" value="GatZ_KbaZ_carbometab"/>
</dbReference>
<dbReference type="InterPro" id="IPR004700">
    <property type="entry name" value="PTS_IIC_man"/>
</dbReference>
<dbReference type="NCBIfam" id="TIGR00822">
    <property type="entry name" value="EII-Sor"/>
    <property type="match status" value="1"/>
</dbReference>
<dbReference type="NCBIfam" id="NF011647">
    <property type="entry name" value="PRK15065.1"/>
    <property type="match status" value="1"/>
</dbReference>
<dbReference type="PANTHER" id="PTHR32502">
    <property type="entry name" value="N-ACETYLGALACTOSAMINE PERMEASE II COMPONENT-RELATED"/>
    <property type="match status" value="1"/>
</dbReference>
<dbReference type="PANTHER" id="PTHR32502:SF4">
    <property type="entry name" value="PTS SYSTEM MANNOSE-SPECIFIC EIIC COMPONENT"/>
    <property type="match status" value="1"/>
</dbReference>
<dbReference type="Pfam" id="PF03609">
    <property type="entry name" value="EII-Sor"/>
    <property type="match status" value="1"/>
</dbReference>
<dbReference type="PROSITE" id="PS51106">
    <property type="entry name" value="PTS_EIIC_TYPE_4"/>
    <property type="match status" value="1"/>
</dbReference>
<feature type="chain" id="PRO_0000186663" description="PTS system sorbose-specific EIIC component">
    <location>
        <begin position="1"/>
        <end position="266"/>
    </location>
</feature>
<feature type="transmembrane region" description="Helical" evidence="1">
    <location>
        <begin position="3"/>
        <end position="23"/>
    </location>
</feature>
<feature type="transmembrane region" description="Helical" evidence="1">
    <location>
        <begin position="33"/>
        <end position="53"/>
    </location>
</feature>
<feature type="transmembrane region" description="Helical" evidence="1">
    <location>
        <begin position="79"/>
        <end position="99"/>
    </location>
</feature>
<feature type="transmembrane region" description="Helical" evidence="1">
    <location>
        <begin position="100"/>
        <end position="120"/>
    </location>
</feature>
<feature type="transmembrane region" description="Helical" evidence="1">
    <location>
        <begin position="151"/>
        <end position="171"/>
    </location>
</feature>
<feature type="transmembrane region" description="Helical" evidence="1">
    <location>
        <begin position="183"/>
        <end position="203"/>
    </location>
</feature>
<feature type="transmembrane region" description="Helical" evidence="1">
    <location>
        <begin position="219"/>
        <end position="239"/>
    </location>
</feature>
<feature type="domain" description="PTS EIIC type-4" evidence="1">
    <location>
        <begin position="1"/>
        <end position="237"/>
    </location>
</feature>